<dbReference type="EC" id="2.7.1.1" evidence="5 8"/>
<dbReference type="EMBL" id="X92895">
    <property type="protein sequence ID" value="CAA63488.1"/>
    <property type="molecule type" value="mRNA"/>
</dbReference>
<dbReference type="EMBL" id="CU329670">
    <property type="protein sequence ID" value="CAB11054.1"/>
    <property type="molecule type" value="Genomic_DNA"/>
</dbReference>
<dbReference type="EMBL" id="D89198">
    <property type="protein sequence ID" value="BAA13859.1"/>
    <property type="molecule type" value="mRNA"/>
</dbReference>
<dbReference type="PIR" id="S68693">
    <property type="entry name" value="S68693"/>
</dbReference>
<dbReference type="PIR" id="T42997">
    <property type="entry name" value="T42997"/>
</dbReference>
<dbReference type="RefSeq" id="NP_593865.1">
    <property type="nucleotide sequence ID" value="NM_001019294.2"/>
</dbReference>
<dbReference type="SMR" id="P50521"/>
<dbReference type="BioGRID" id="280022">
    <property type="interactions" value="10"/>
</dbReference>
<dbReference type="FunCoup" id="P50521">
    <property type="interactions" value="264"/>
</dbReference>
<dbReference type="STRING" id="284812.P50521"/>
<dbReference type="iPTMnet" id="P50521"/>
<dbReference type="PaxDb" id="4896-SPAC4F8.07c.1"/>
<dbReference type="EnsemblFungi" id="SPAC4F8.07c.1">
    <property type="protein sequence ID" value="SPAC4F8.07c.1:pep"/>
    <property type="gene ID" value="SPAC4F8.07c"/>
</dbReference>
<dbReference type="GeneID" id="2543607"/>
<dbReference type="KEGG" id="spo:2543607"/>
<dbReference type="PomBase" id="SPAC4F8.07c">
    <property type="gene designation" value="hxk2"/>
</dbReference>
<dbReference type="VEuPathDB" id="FungiDB:SPAC4F8.07c"/>
<dbReference type="eggNOG" id="KOG1369">
    <property type="taxonomic scope" value="Eukaryota"/>
</dbReference>
<dbReference type="HOGENOM" id="CLU_014393_5_0_1"/>
<dbReference type="InParanoid" id="P50521"/>
<dbReference type="OMA" id="YPNFEGY"/>
<dbReference type="PhylomeDB" id="P50521"/>
<dbReference type="BRENDA" id="2.7.1.1">
    <property type="organism ID" value="5613"/>
</dbReference>
<dbReference type="Reactome" id="R-SPO-170822">
    <property type="pathway name" value="Regulation of Glucokinase by Glucokinase Regulatory Protein"/>
</dbReference>
<dbReference type="Reactome" id="R-SPO-446205">
    <property type="pathway name" value="Synthesis of GDP-mannose"/>
</dbReference>
<dbReference type="Reactome" id="R-SPO-6798695">
    <property type="pathway name" value="Neutrophil degranulation"/>
</dbReference>
<dbReference type="Reactome" id="R-SPO-70171">
    <property type="pathway name" value="Glycolysis"/>
</dbReference>
<dbReference type="SABIO-RK" id="P50521"/>
<dbReference type="UniPathway" id="UPA00109">
    <property type="reaction ID" value="UER00180"/>
</dbReference>
<dbReference type="UniPathway" id="UPA00242"/>
<dbReference type="PRO" id="PR:P50521"/>
<dbReference type="Proteomes" id="UP000002485">
    <property type="component" value="Chromosome I"/>
</dbReference>
<dbReference type="GO" id="GO:0005829">
    <property type="term" value="C:cytosol"/>
    <property type="evidence" value="ECO:0007005"/>
    <property type="project" value="PomBase"/>
</dbReference>
<dbReference type="GO" id="GO:0005739">
    <property type="term" value="C:mitochondrion"/>
    <property type="evidence" value="ECO:0000318"/>
    <property type="project" value="GO_Central"/>
</dbReference>
<dbReference type="GO" id="GO:0005524">
    <property type="term" value="F:ATP binding"/>
    <property type="evidence" value="ECO:0007669"/>
    <property type="project" value="UniProtKB-KW"/>
</dbReference>
<dbReference type="GO" id="GO:0005536">
    <property type="term" value="F:D-glucose binding"/>
    <property type="evidence" value="ECO:0007669"/>
    <property type="project" value="InterPro"/>
</dbReference>
<dbReference type="GO" id="GO:0008865">
    <property type="term" value="F:fructokinase activity"/>
    <property type="evidence" value="ECO:0000314"/>
    <property type="project" value="PomBase"/>
</dbReference>
<dbReference type="GO" id="GO:0004340">
    <property type="term" value="F:glucokinase activity"/>
    <property type="evidence" value="ECO:0000314"/>
    <property type="project" value="PomBase"/>
</dbReference>
<dbReference type="GO" id="GO:0019158">
    <property type="term" value="F:mannokinase activity"/>
    <property type="evidence" value="ECO:0000314"/>
    <property type="project" value="PomBase"/>
</dbReference>
<dbReference type="GO" id="GO:0061621">
    <property type="term" value="P:canonical glycolysis"/>
    <property type="evidence" value="ECO:0000315"/>
    <property type="project" value="PomBase"/>
</dbReference>
<dbReference type="GO" id="GO:0051156">
    <property type="term" value="P:glucose 6-phosphate metabolic process"/>
    <property type="evidence" value="ECO:0000318"/>
    <property type="project" value="GO_Central"/>
</dbReference>
<dbReference type="GO" id="GO:0006006">
    <property type="term" value="P:glucose metabolic process"/>
    <property type="evidence" value="ECO:0000318"/>
    <property type="project" value="GO_Central"/>
</dbReference>
<dbReference type="GO" id="GO:0006096">
    <property type="term" value="P:glycolytic process"/>
    <property type="evidence" value="ECO:0000318"/>
    <property type="project" value="GO_Central"/>
</dbReference>
<dbReference type="GO" id="GO:0001678">
    <property type="term" value="P:intracellular glucose homeostasis"/>
    <property type="evidence" value="ECO:0000318"/>
    <property type="project" value="GO_Central"/>
</dbReference>
<dbReference type="Gene3D" id="3.30.420.40">
    <property type="match status" value="1"/>
</dbReference>
<dbReference type="Gene3D" id="3.40.367.20">
    <property type="match status" value="1"/>
</dbReference>
<dbReference type="InterPro" id="IPR043129">
    <property type="entry name" value="ATPase_NBD"/>
</dbReference>
<dbReference type="InterPro" id="IPR001312">
    <property type="entry name" value="Hexokinase"/>
</dbReference>
<dbReference type="InterPro" id="IPR019807">
    <property type="entry name" value="Hexokinase_BS"/>
</dbReference>
<dbReference type="InterPro" id="IPR022673">
    <property type="entry name" value="Hexokinase_C"/>
</dbReference>
<dbReference type="InterPro" id="IPR022672">
    <property type="entry name" value="Hexokinase_N"/>
</dbReference>
<dbReference type="PANTHER" id="PTHR19443:SF30">
    <property type="entry name" value="GLUCOKINASE-1-RELATED"/>
    <property type="match status" value="1"/>
</dbReference>
<dbReference type="PANTHER" id="PTHR19443">
    <property type="entry name" value="HEXOKINASE"/>
    <property type="match status" value="1"/>
</dbReference>
<dbReference type="Pfam" id="PF00349">
    <property type="entry name" value="Hexokinase_1"/>
    <property type="match status" value="1"/>
</dbReference>
<dbReference type="Pfam" id="PF03727">
    <property type="entry name" value="Hexokinase_2"/>
    <property type="match status" value="1"/>
</dbReference>
<dbReference type="PRINTS" id="PR00475">
    <property type="entry name" value="HEXOKINASE"/>
</dbReference>
<dbReference type="SUPFAM" id="SSF53067">
    <property type="entry name" value="Actin-like ATPase domain"/>
    <property type="match status" value="2"/>
</dbReference>
<dbReference type="PROSITE" id="PS00378">
    <property type="entry name" value="HEXOKINASE_1"/>
    <property type="match status" value="1"/>
</dbReference>
<dbReference type="PROSITE" id="PS51748">
    <property type="entry name" value="HEXOKINASE_2"/>
    <property type="match status" value="1"/>
</dbReference>
<reference key="1">
    <citation type="journal article" date="1996" name="FEBS Lett.">
        <title>Schizosaccharomyces pombe possesses an unusual and a conventional hexokinase: biochemical and molecular characterization of both hexokinases.</title>
        <authorList>
            <person name="Petit T."/>
            <person name="Blazquez M.A."/>
            <person name="Gancedo C."/>
        </authorList>
    </citation>
    <scope>NUCLEOTIDE SEQUENCE [MRNA]</scope>
    <scope>FUNCTION</scope>
    <scope>CATALYTIC ACTIVITY</scope>
</reference>
<reference key="2">
    <citation type="journal article" date="2002" name="Nature">
        <title>The genome sequence of Schizosaccharomyces pombe.</title>
        <authorList>
            <person name="Wood V."/>
            <person name="Gwilliam R."/>
            <person name="Rajandream M.A."/>
            <person name="Lyne M.H."/>
            <person name="Lyne R."/>
            <person name="Stewart A."/>
            <person name="Sgouros J.G."/>
            <person name="Peat N."/>
            <person name="Hayles J."/>
            <person name="Baker S.G."/>
            <person name="Basham D."/>
            <person name="Bowman S."/>
            <person name="Brooks K."/>
            <person name="Brown D."/>
            <person name="Brown S."/>
            <person name="Chillingworth T."/>
            <person name="Churcher C.M."/>
            <person name="Collins M."/>
            <person name="Connor R."/>
            <person name="Cronin A."/>
            <person name="Davis P."/>
            <person name="Feltwell T."/>
            <person name="Fraser A."/>
            <person name="Gentles S."/>
            <person name="Goble A."/>
            <person name="Hamlin N."/>
            <person name="Harris D.E."/>
            <person name="Hidalgo J."/>
            <person name="Hodgson G."/>
            <person name="Holroyd S."/>
            <person name="Hornsby T."/>
            <person name="Howarth S."/>
            <person name="Huckle E.J."/>
            <person name="Hunt S."/>
            <person name="Jagels K."/>
            <person name="James K.D."/>
            <person name="Jones L."/>
            <person name="Jones M."/>
            <person name="Leather S."/>
            <person name="McDonald S."/>
            <person name="McLean J."/>
            <person name="Mooney P."/>
            <person name="Moule S."/>
            <person name="Mungall K.L."/>
            <person name="Murphy L.D."/>
            <person name="Niblett D."/>
            <person name="Odell C."/>
            <person name="Oliver K."/>
            <person name="O'Neil S."/>
            <person name="Pearson D."/>
            <person name="Quail M.A."/>
            <person name="Rabbinowitsch E."/>
            <person name="Rutherford K.M."/>
            <person name="Rutter S."/>
            <person name="Saunders D."/>
            <person name="Seeger K."/>
            <person name="Sharp S."/>
            <person name="Skelton J."/>
            <person name="Simmonds M.N."/>
            <person name="Squares R."/>
            <person name="Squares S."/>
            <person name="Stevens K."/>
            <person name="Taylor K."/>
            <person name="Taylor R.G."/>
            <person name="Tivey A."/>
            <person name="Walsh S.V."/>
            <person name="Warren T."/>
            <person name="Whitehead S."/>
            <person name="Woodward J.R."/>
            <person name="Volckaert G."/>
            <person name="Aert R."/>
            <person name="Robben J."/>
            <person name="Grymonprez B."/>
            <person name="Weltjens I."/>
            <person name="Vanstreels E."/>
            <person name="Rieger M."/>
            <person name="Schaefer M."/>
            <person name="Mueller-Auer S."/>
            <person name="Gabel C."/>
            <person name="Fuchs M."/>
            <person name="Duesterhoeft A."/>
            <person name="Fritzc C."/>
            <person name="Holzer E."/>
            <person name="Moestl D."/>
            <person name="Hilbert H."/>
            <person name="Borzym K."/>
            <person name="Langer I."/>
            <person name="Beck A."/>
            <person name="Lehrach H."/>
            <person name="Reinhardt R."/>
            <person name="Pohl T.M."/>
            <person name="Eger P."/>
            <person name="Zimmermann W."/>
            <person name="Wedler H."/>
            <person name="Wambutt R."/>
            <person name="Purnelle B."/>
            <person name="Goffeau A."/>
            <person name="Cadieu E."/>
            <person name="Dreano S."/>
            <person name="Gloux S."/>
            <person name="Lelaure V."/>
            <person name="Mottier S."/>
            <person name="Galibert F."/>
            <person name="Aves S.J."/>
            <person name="Xiang Z."/>
            <person name="Hunt C."/>
            <person name="Moore K."/>
            <person name="Hurst S.M."/>
            <person name="Lucas M."/>
            <person name="Rochet M."/>
            <person name="Gaillardin C."/>
            <person name="Tallada V.A."/>
            <person name="Garzon A."/>
            <person name="Thode G."/>
            <person name="Daga R.R."/>
            <person name="Cruzado L."/>
            <person name="Jimenez J."/>
            <person name="Sanchez M."/>
            <person name="del Rey F."/>
            <person name="Benito J."/>
            <person name="Dominguez A."/>
            <person name="Revuelta J.L."/>
            <person name="Moreno S."/>
            <person name="Armstrong J."/>
            <person name="Forsburg S.L."/>
            <person name="Cerutti L."/>
            <person name="Lowe T."/>
            <person name="McCombie W.R."/>
            <person name="Paulsen I."/>
            <person name="Potashkin J."/>
            <person name="Shpakovski G.V."/>
            <person name="Ussery D."/>
            <person name="Barrell B.G."/>
            <person name="Nurse P."/>
        </authorList>
    </citation>
    <scope>NUCLEOTIDE SEQUENCE [LARGE SCALE GENOMIC DNA]</scope>
    <source>
        <strain>972 / ATCC 24843</strain>
    </source>
</reference>
<reference key="3">
    <citation type="journal article" date="1997" name="DNA Res.">
        <title>Identification of open reading frames in Schizosaccharomyces pombe cDNAs.</title>
        <authorList>
            <person name="Yoshioka S."/>
            <person name="Kato K."/>
            <person name="Nakai K."/>
            <person name="Okayama H."/>
            <person name="Nojima H."/>
        </authorList>
    </citation>
    <scope>NUCLEOTIDE SEQUENCE [LARGE SCALE MRNA] OF 20-455</scope>
    <source>
        <strain>PR745</strain>
    </source>
</reference>
<reference key="4">
    <citation type="journal article" date="1998" name="Biochem. Biophys. Res. Commun.">
        <title>A mutation Ser213/Asn in the hexokinase 1 from Schizosaccharomyces pombe increases its affinity for glucose.</title>
        <authorList>
            <person name="Petit T."/>
            <person name="Herrero P."/>
            <person name="Gancedo C."/>
        </authorList>
    </citation>
    <scope>FUNCTION</scope>
    <scope>CATALYTIC ACTIVITY</scope>
    <scope>BIOPHYSICOCHEMICAL PROPERTIES</scope>
    <scope>MUTAGENESIS OF ASN-196</scope>
</reference>
<gene>
    <name evidence="6" type="primary">hxk2</name>
    <name type="ORF">SPAC4F8.07c</name>
</gene>
<name>HXK2_SCHPO</name>
<proteinExistence type="evidence at protein level"/>
<protein>
    <recommendedName>
        <fullName evidence="6">Hexokinase-2</fullName>
        <ecNumber evidence="5 8">2.7.1.1</ecNumber>
    </recommendedName>
</protein>
<organism>
    <name type="scientific">Schizosaccharomyces pombe (strain 972 / ATCC 24843)</name>
    <name type="common">Fission yeast</name>
    <dbReference type="NCBI Taxonomy" id="284812"/>
    <lineage>
        <taxon>Eukaryota</taxon>
        <taxon>Fungi</taxon>
        <taxon>Dikarya</taxon>
        <taxon>Ascomycota</taxon>
        <taxon>Taphrinomycotina</taxon>
        <taxon>Schizosaccharomycetes</taxon>
        <taxon>Schizosaccharomycetales</taxon>
        <taxon>Schizosaccharomycetaceae</taxon>
        <taxon>Schizosaccharomyces</taxon>
    </lineage>
</organism>
<feature type="chain" id="PRO_0000197610" description="Hexokinase-2">
    <location>
        <begin position="1"/>
        <end position="455"/>
    </location>
</feature>
<feature type="domain" description="Hexokinase" evidence="3">
    <location>
        <begin position="3"/>
        <end position="445"/>
    </location>
</feature>
<feature type="region of interest" description="Hexokinase small subdomain" evidence="3">
    <location>
        <begin position="57"/>
        <end position="195"/>
    </location>
</feature>
<feature type="region of interest" description="Hexokinase large subdomain" evidence="3">
    <location>
        <begin position="196"/>
        <end position="434"/>
    </location>
</feature>
<feature type="binding site" evidence="1">
    <location>
        <begin position="68"/>
        <end position="73"/>
    </location>
    <ligand>
        <name>ATP</name>
        <dbReference type="ChEBI" id="CHEBI:30616"/>
    </ligand>
</feature>
<feature type="binding site" evidence="2">
    <location>
        <begin position="144"/>
        <end position="145"/>
    </location>
    <ligand>
        <name>substrate</name>
    </ligand>
</feature>
<feature type="binding site" evidence="2">
    <location>
        <begin position="161"/>
        <end position="162"/>
    </location>
    <ligand>
        <name>substrate</name>
    </ligand>
</feature>
<feature type="binding site" evidence="2">
    <location>
        <begin position="196"/>
        <end position="197"/>
    </location>
    <ligand>
        <name>substrate</name>
    </ligand>
</feature>
<feature type="binding site" evidence="2">
    <location>
        <position position="222"/>
    </location>
    <ligand>
        <name>ATP</name>
        <dbReference type="ChEBI" id="CHEBI:30616"/>
    </ligand>
</feature>
<feature type="binding site" evidence="2">
    <location>
        <position position="225"/>
    </location>
    <ligand>
        <name>substrate</name>
    </ligand>
</feature>
<feature type="binding site" evidence="2">
    <location>
        <position position="252"/>
    </location>
    <ligand>
        <name>substrate</name>
    </ligand>
</feature>
<feature type="binding site" evidence="2">
    <location>
        <position position="283"/>
    </location>
    <ligand>
        <name>substrate</name>
    </ligand>
</feature>
<feature type="binding site" evidence="2">
    <location>
        <begin position="288"/>
        <end position="289"/>
    </location>
    <ligand>
        <name>ATP</name>
        <dbReference type="ChEBI" id="CHEBI:30616"/>
    </ligand>
</feature>
<feature type="binding site" evidence="2">
    <location>
        <begin position="325"/>
        <end position="329"/>
    </location>
    <ligand>
        <name>ATP</name>
        <dbReference type="ChEBI" id="CHEBI:30616"/>
    </ligand>
</feature>
<feature type="binding site" evidence="2">
    <location>
        <begin position="400"/>
        <end position="404"/>
    </location>
    <ligand>
        <name>ATP</name>
        <dbReference type="ChEBI" id="CHEBI:30616"/>
    </ligand>
</feature>
<feature type="mutagenesis site" description="Decreased affinity for D-glucose." evidence="5">
    <original>N</original>
    <variation>S</variation>
    <location>
        <position position="196"/>
    </location>
</feature>
<feature type="sequence conflict" description="In Ref. 3; BAA13859." evidence="7" ref="3">
    <original>F</original>
    <variation>S</variation>
    <location>
        <position position="295"/>
    </location>
</feature>
<feature type="sequence conflict" description="In Ref. 3; BAA13859." evidence="7" ref="3">
    <original>A</original>
    <variation>V</variation>
    <location>
        <position position="298"/>
    </location>
</feature>
<sequence>MEANFQQAVKKLVNDFEYPTESLREAVKEFDELRQKGLQKNGEVLAMAPAFISTLPTGAETGDFLALDFGGTNLRVCWIQLLGDGKYEMKHSKSVLPRECVRNESVKPIIDFMSDHVELFIKEHFPSKFGCPEEEYLPMGFTFSYPANQVSITESYLLRWTKGLNIPEAINKDFAQFLTEGFKARNLPIRIEAVINDTVGTLVTRAYTSKESDTFMGIIFGTGTNGAYVEQMNQIPKLAGKCTGDHMLINMEWGATDFSCLHSTRYDLLLDHDTPNAGRQIFEKRVGGMYLGELFRRALFHLIKVYNFNEGIFPPSITDAWSLETSVLSRMMVERSAENVRNVLSTFKFRFRSDEEALYLWDAAHAIGRRAARMSAVPIASLYLSTGRAGKKSDVGVDGSLVEHYPHFVDMLREALRELIGDNEKLISIGIAKDGSGIGAALCALQAVKEKKGLA</sequence>
<comment type="function">
    <text evidence="4 5 7">Catalyzes the phosphorylation of hexose (six-carbon sugars) to hexose 6-phosphate (PubMed:8549830, PubMed:9790975). Phosphorylates D-glucose, D-fructose and D-mannose (PubMed:8549830, PubMed:9790975). Compared to hxk1, has a much higher affinity for D-glucose (PubMed:8549830, PubMed:9790975). Constitutes the initial enzyme of glycolysis by catalyzing the phosphorylation of glucose to D-glucose 6-phosphate (Probable).</text>
</comment>
<comment type="catalytic activity">
    <reaction evidence="5 8">
        <text>a D-hexose + ATP = a D-hexose 6-phosphate + ADP + H(+)</text>
        <dbReference type="Rhea" id="RHEA:22740"/>
        <dbReference type="ChEBI" id="CHEBI:4194"/>
        <dbReference type="ChEBI" id="CHEBI:15378"/>
        <dbReference type="ChEBI" id="CHEBI:30616"/>
        <dbReference type="ChEBI" id="CHEBI:229467"/>
        <dbReference type="ChEBI" id="CHEBI:456216"/>
        <dbReference type="EC" id="2.7.1.1"/>
    </reaction>
    <physiologicalReaction direction="left-to-right" evidence="5 8">
        <dbReference type="Rhea" id="RHEA:22741"/>
    </physiologicalReaction>
</comment>
<comment type="catalytic activity">
    <reaction evidence="5 8">
        <text>D-mannose + ATP = D-mannose 6-phosphate + ADP + H(+)</text>
        <dbReference type="Rhea" id="RHEA:11028"/>
        <dbReference type="ChEBI" id="CHEBI:4208"/>
        <dbReference type="ChEBI" id="CHEBI:15378"/>
        <dbReference type="ChEBI" id="CHEBI:30616"/>
        <dbReference type="ChEBI" id="CHEBI:58735"/>
        <dbReference type="ChEBI" id="CHEBI:456216"/>
        <dbReference type="EC" id="2.7.1.1"/>
    </reaction>
    <physiologicalReaction direction="left-to-right" evidence="5 8">
        <dbReference type="Rhea" id="RHEA:11029"/>
    </physiologicalReaction>
</comment>
<comment type="catalytic activity">
    <reaction evidence="5 8">
        <text>D-fructose + ATP = D-fructose 6-phosphate + ADP + H(+)</text>
        <dbReference type="Rhea" id="RHEA:16125"/>
        <dbReference type="ChEBI" id="CHEBI:15378"/>
        <dbReference type="ChEBI" id="CHEBI:30616"/>
        <dbReference type="ChEBI" id="CHEBI:37721"/>
        <dbReference type="ChEBI" id="CHEBI:61527"/>
        <dbReference type="ChEBI" id="CHEBI:456216"/>
        <dbReference type="EC" id="2.7.1.1"/>
    </reaction>
    <physiologicalReaction direction="left-to-right" evidence="5 8">
        <dbReference type="Rhea" id="RHEA:16126"/>
    </physiologicalReaction>
</comment>
<comment type="catalytic activity">
    <reaction evidence="5 8">
        <text>D-glucose + ATP = D-glucose 6-phosphate + ADP + H(+)</text>
        <dbReference type="Rhea" id="RHEA:17825"/>
        <dbReference type="ChEBI" id="CHEBI:4167"/>
        <dbReference type="ChEBI" id="CHEBI:15378"/>
        <dbReference type="ChEBI" id="CHEBI:30616"/>
        <dbReference type="ChEBI" id="CHEBI:61548"/>
        <dbReference type="ChEBI" id="CHEBI:456216"/>
        <dbReference type="EC" id="2.7.1.1"/>
    </reaction>
    <physiologicalReaction direction="left-to-right" evidence="5 8">
        <dbReference type="Rhea" id="RHEA:17826"/>
    </physiologicalReaction>
</comment>
<comment type="biophysicochemical properties">
    <kinetics>
        <KM evidence="5">0.16 mM for D-glucose</KM>
    </kinetics>
</comment>
<comment type="pathway">
    <text evidence="8">Carbohydrate metabolism; hexose metabolism.</text>
</comment>
<comment type="pathway">
    <text evidence="8">Carbohydrate degradation; glycolysis; D-glyceraldehyde 3-phosphate and glycerone phosphate from D-glucose: step 1/4.</text>
</comment>
<comment type="subunit">
    <text evidence="1">Monomer.</text>
</comment>
<comment type="similarity">
    <text evidence="3 7">Belongs to the hexokinase family.</text>
</comment>
<evidence type="ECO:0000250" key="1">
    <source>
        <dbReference type="UniProtKB" id="P19367"/>
    </source>
</evidence>
<evidence type="ECO:0000250" key="2">
    <source>
        <dbReference type="UniProtKB" id="P35557"/>
    </source>
</evidence>
<evidence type="ECO:0000255" key="3">
    <source>
        <dbReference type="PROSITE-ProRule" id="PRU01084"/>
    </source>
</evidence>
<evidence type="ECO:0000269" key="4">
    <source>
    </source>
</evidence>
<evidence type="ECO:0000269" key="5">
    <source>
    </source>
</evidence>
<evidence type="ECO:0000303" key="6">
    <source>
    </source>
</evidence>
<evidence type="ECO:0000305" key="7"/>
<evidence type="ECO:0000305" key="8">
    <source>
    </source>
</evidence>
<keyword id="KW-0067">ATP-binding</keyword>
<keyword id="KW-0324">Glycolysis</keyword>
<keyword id="KW-0418">Kinase</keyword>
<keyword id="KW-0547">Nucleotide-binding</keyword>
<keyword id="KW-1185">Reference proteome</keyword>
<keyword id="KW-0808">Transferase</keyword>
<accession>P50521</accession>
<accession>P78848</accession>